<dbReference type="EMBL" id="AL123456">
    <property type="protein sequence ID" value="CCP43175.1"/>
    <property type="molecule type" value="Genomic_DNA"/>
</dbReference>
<dbReference type="PIR" id="E70830">
    <property type="entry name" value="E70830"/>
</dbReference>
<dbReference type="RefSeq" id="NP_214958.1">
    <property type="nucleotide sequence ID" value="NC_000962.3"/>
</dbReference>
<dbReference type="RefSeq" id="WP_003898455.1">
    <property type="nucleotide sequence ID" value="NZ_NVQJ01000002.1"/>
</dbReference>
<dbReference type="PDB" id="4NQW">
    <property type="method" value="X-ray"/>
    <property type="resolution" value="2.40 A"/>
    <property type="chains" value="B=1-80"/>
</dbReference>
<dbReference type="PDBsum" id="4NQW"/>
<dbReference type="SMR" id="P9WGX5"/>
<dbReference type="STRING" id="83332.Rv0444c"/>
<dbReference type="iPTMnet" id="P9WGX5"/>
<dbReference type="PaxDb" id="83332-Rv0444c"/>
<dbReference type="GeneID" id="886346"/>
<dbReference type="KEGG" id="mtu:Rv0444c"/>
<dbReference type="KEGG" id="mtv:RVBD_0444c"/>
<dbReference type="TubercuList" id="Rv0444c"/>
<dbReference type="eggNOG" id="COG5343">
    <property type="taxonomic scope" value="Bacteria"/>
</dbReference>
<dbReference type="InParanoid" id="P9WGX5"/>
<dbReference type="OrthoDB" id="153510at2"/>
<dbReference type="PhylomeDB" id="P9WGX5"/>
<dbReference type="EvolutionaryTrace" id="P9WGX5"/>
<dbReference type="Proteomes" id="UP000001584">
    <property type="component" value="Chromosome"/>
</dbReference>
<dbReference type="GO" id="GO:0009274">
    <property type="term" value="C:peptidoglycan-based cell wall"/>
    <property type="evidence" value="ECO:0007005"/>
    <property type="project" value="MTBBASE"/>
</dbReference>
<dbReference type="GO" id="GO:0005886">
    <property type="term" value="C:plasma membrane"/>
    <property type="evidence" value="ECO:0007005"/>
    <property type="project" value="MTBBASE"/>
</dbReference>
<dbReference type="GO" id="GO:0016989">
    <property type="term" value="F:sigma factor antagonist activity"/>
    <property type="evidence" value="ECO:0000314"/>
    <property type="project" value="MTBBASE"/>
</dbReference>
<dbReference type="GO" id="GO:0006417">
    <property type="term" value="P:regulation of translation"/>
    <property type="evidence" value="ECO:0000314"/>
    <property type="project" value="MTBBASE"/>
</dbReference>
<dbReference type="Gene3D" id="1.10.10.1320">
    <property type="entry name" value="Anti-sigma factor, zinc-finger domain"/>
    <property type="match status" value="1"/>
</dbReference>
<dbReference type="InterPro" id="IPR051474">
    <property type="entry name" value="Anti-sigma-K/W_factor"/>
</dbReference>
<dbReference type="InterPro" id="IPR041916">
    <property type="entry name" value="Anti_sigma_zinc_sf"/>
</dbReference>
<dbReference type="InterPro" id="IPR018764">
    <property type="entry name" value="RskA_C"/>
</dbReference>
<dbReference type="InterPro" id="IPR053877">
    <property type="entry name" value="RskA_N"/>
</dbReference>
<dbReference type="PANTHER" id="PTHR37461">
    <property type="entry name" value="ANTI-SIGMA-K FACTOR RSKA"/>
    <property type="match status" value="1"/>
</dbReference>
<dbReference type="PANTHER" id="PTHR37461:SF1">
    <property type="entry name" value="ANTI-SIGMA-K FACTOR RSKA"/>
    <property type="match status" value="1"/>
</dbReference>
<dbReference type="Pfam" id="PF10099">
    <property type="entry name" value="RskA_C"/>
    <property type="match status" value="1"/>
</dbReference>
<dbReference type="Pfam" id="PF22618">
    <property type="entry name" value="RskA_N"/>
    <property type="match status" value="1"/>
</dbReference>
<protein>
    <recommendedName>
        <fullName>Anti-sigma-K factor RskA</fullName>
    </recommendedName>
    <alternativeName>
        <fullName>Regulator of SigK</fullName>
    </alternativeName>
    <alternativeName>
        <fullName>Sigma-K anti-sigma factor RskA</fullName>
    </alternativeName>
</protein>
<keyword id="KW-0002">3D-structure</keyword>
<keyword id="KW-0007">Acetylation</keyword>
<keyword id="KW-1003">Cell membrane</keyword>
<keyword id="KW-0472">Membrane</keyword>
<keyword id="KW-1185">Reference proteome</keyword>
<keyword id="KW-0804">Transcription</keyword>
<keyword id="KW-0805">Transcription regulation</keyword>
<keyword id="KW-0812">Transmembrane</keyword>
<keyword id="KW-1133">Transmembrane helix</keyword>
<sequence>MTEHTDFELLELATPYALNAVSDDERADIDRRVAAAPSPVAAAFNDEVRAVRETMAVVSAATTAEPPAHLRTAILDATKPEVRRQSRWRTAAFASAAAIAVGLGAFGLGVLTRPSPPPTVAEQVLTAPDVRTVSRPLGAGTATVVFSRDRNTGLLVMNNVAPPSRGTVYQMWLLGGAKGPRSAGTMGTAAVTPSTTATLTDLGASTALAFTVEPGTGSPQPTGTILAELPLG</sequence>
<feature type="initiator methionine" description="Removed" evidence="6">
    <location>
        <position position="1"/>
    </location>
</feature>
<feature type="chain" id="PRO_0000313835" description="Anti-sigma-K factor RskA">
    <location>
        <begin position="2"/>
        <end position="232"/>
    </location>
</feature>
<feature type="topological domain" description="Cytoplasmic" evidence="1">
    <location>
        <begin position="2"/>
        <end position="90"/>
    </location>
</feature>
<feature type="transmembrane region" description="Helical" evidence="1">
    <location>
        <begin position="91"/>
        <end position="111"/>
    </location>
</feature>
<feature type="topological domain" description="Extracellular" evidence="1">
    <location>
        <begin position="112"/>
        <end position="232"/>
    </location>
</feature>
<feature type="modified residue" description="N-acetylthreonine" evidence="6">
    <location>
        <position position="2"/>
    </location>
</feature>
<feature type="helix" evidence="7">
    <location>
        <begin position="9"/>
        <end position="12"/>
    </location>
</feature>
<feature type="helix" evidence="7">
    <location>
        <begin position="13"/>
        <end position="17"/>
    </location>
</feature>
<feature type="helix" evidence="7">
    <location>
        <begin position="23"/>
        <end position="35"/>
    </location>
</feature>
<feature type="helix" evidence="7">
    <location>
        <begin position="38"/>
        <end position="58"/>
    </location>
</feature>
<feature type="helix" evidence="7">
    <location>
        <begin position="59"/>
        <end position="62"/>
    </location>
</feature>
<feature type="helix" evidence="7">
    <location>
        <begin position="68"/>
        <end position="76"/>
    </location>
</feature>
<organism>
    <name type="scientific">Mycobacterium tuberculosis (strain ATCC 25618 / H37Rv)</name>
    <dbReference type="NCBI Taxonomy" id="83332"/>
    <lineage>
        <taxon>Bacteria</taxon>
        <taxon>Bacillati</taxon>
        <taxon>Actinomycetota</taxon>
        <taxon>Actinomycetes</taxon>
        <taxon>Mycobacteriales</taxon>
        <taxon>Mycobacteriaceae</taxon>
        <taxon>Mycobacterium</taxon>
        <taxon>Mycobacterium tuberculosis complex</taxon>
    </lineage>
</organism>
<evidence type="ECO:0000255" key="1"/>
<evidence type="ECO:0000269" key="2">
    <source>
    </source>
</evidence>
<evidence type="ECO:0000269" key="3">
    <source>
    </source>
</evidence>
<evidence type="ECO:0000269" key="4">
    <source ref="5"/>
</evidence>
<evidence type="ECO:0000305" key="5"/>
<evidence type="ECO:0007744" key="6">
    <source>
    </source>
</evidence>
<evidence type="ECO:0007829" key="7">
    <source>
        <dbReference type="PDB" id="4NQW"/>
    </source>
</evidence>
<comment type="function">
    <text evidence="2">An anti-sigma factor for extracytoplasmic function (ECF) sigma factor SigK. ECF sigma factors are held in an inactive form by an anti-sigma factor until released by regulated intramembrane proteolysis (RIP). RIP occurs when an extracytoplasmic signal triggers a concerted proteolytic cascade to transmit information and elicit cellular responses. The membrane-spanning regulatory substrate protein is first cut extracytoplasmically (site-1 protease, S1P), then within the membrane itself (site-2 protease, S2P, Rip1), while cytoplasmic proteases finish degrading the regulatory protein, liberating the sigma factor.</text>
</comment>
<comment type="subunit">
    <text evidence="3 4">Interacts with ECF RNA polymerase sigma factor SigK; this inhibits the interaction of SigK with the RNA polymerase catalytic core and leads to a decreased expression of SigK-regulated genes, such as mpt70 and mpt83.</text>
</comment>
<comment type="subcellular location">
    <subcellularLocation>
        <location evidence="5">Cell membrane</location>
        <topology evidence="5">Single-pass membrane protein</topology>
    </subcellularLocation>
</comment>
<comment type="domain">
    <text>The cytosolic domain interacts with sigma factor SigK.</text>
</comment>
<comment type="similarity">
    <text evidence="5">Belongs to the anti-sigma-K factor family.</text>
</comment>
<gene>
    <name type="primary">rskA</name>
    <name type="ordered locus">Rv0444c</name>
</gene>
<name>RSKA_MYCTU</name>
<reference key="1">
    <citation type="journal article" date="1998" name="Nature">
        <title>Deciphering the biology of Mycobacterium tuberculosis from the complete genome sequence.</title>
        <authorList>
            <person name="Cole S.T."/>
            <person name="Brosch R."/>
            <person name="Parkhill J."/>
            <person name="Garnier T."/>
            <person name="Churcher C.M."/>
            <person name="Harris D.E."/>
            <person name="Gordon S.V."/>
            <person name="Eiglmeier K."/>
            <person name="Gas S."/>
            <person name="Barry C.E. III"/>
            <person name="Tekaia F."/>
            <person name="Badcock K."/>
            <person name="Basham D."/>
            <person name="Brown D."/>
            <person name="Chillingworth T."/>
            <person name="Connor R."/>
            <person name="Davies R.M."/>
            <person name="Devlin K."/>
            <person name="Feltwell T."/>
            <person name="Gentles S."/>
            <person name="Hamlin N."/>
            <person name="Holroyd S."/>
            <person name="Hornsby T."/>
            <person name="Jagels K."/>
            <person name="Krogh A."/>
            <person name="McLean J."/>
            <person name="Moule S."/>
            <person name="Murphy L.D."/>
            <person name="Oliver S."/>
            <person name="Osborne J."/>
            <person name="Quail M.A."/>
            <person name="Rajandream M.A."/>
            <person name="Rogers J."/>
            <person name="Rutter S."/>
            <person name="Seeger K."/>
            <person name="Skelton S."/>
            <person name="Squares S."/>
            <person name="Squares R."/>
            <person name="Sulston J.E."/>
            <person name="Taylor K."/>
            <person name="Whitehead S."/>
            <person name="Barrell B.G."/>
        </authorList>
    </citation>
    <scope>NUCLEOTIDE SEQUENCE [LARGE SCALE GENOMIC DNA]</scope>
    <source>
        <strain>ATCC 25618 / H37Rv</strain>
    </source>
</reference>
<reference key="2">
    <citation type="journal article" date="2006" name="Mol. Microbiol.">
        <title>Mutations in Mycobacterium tuberculosis Rv0444c, the gene encoding anti-sigK, explain high level expression of MPB70 and MPB83 in Mycobacterium bovis.</title>
        <authorList>
            <person name="Said-Salim B."/>
            <person name="Mostowy S."/>
            <person name="Kristof A.S."/>
            <person name="Behr M.A."/>
        </authorList>
    </citation>
    <scope>FUNCTION AS AN ANTI-SIGMA-K FACTOR</scope>
    <source>
        <strain>ATCC 25618 / H37Rv</strain>
    </source>
</reference>
<reference key="3">
    <citation type="journal article" date="2010" name="Protein Expr. Purif.">
        <title>Over-expression and purification strategies for recombinant multi-protein oligomers: a case study of Mycobacterium tuberculosis sigma/anti-sigma factor protein complexes.</title>
        <authorList>
            <person name="Thakur K.G."/>
            <person name="Jaiswal R.K."/>
            <person name="Shukla J.K."/>
            <person name="Praveena T."/>
            <person name="Gopal B."/>
        </authorList>
    </citation>
    <scope>INTERACTION WITH SIGK</scope>
</reference>
<reference key="4">
    <citation type="journal article" date="2011" name="Mol. Cell. Proteomics">
        <title>Proteogenomic analysis of Mycobacterium tuberculosis by high resolution mass spectrometry.</title>
        <authorList>
            <person name="Kelkar D.S."/>
            <person name="Kumar D."/>
            <person name="Kumar P."/>
            <person name="Balakrishnan L."/>
            <person name="Muthusamy B."/>
            <person name="Yadav A.K."/>
            <person name="Shrivastava P."/>
            <person name="Marimuthu A."/>
            <person name="Anand S."/>
            <person name="Sundaram H."/>
            <person name="Kingsbury R."/>
            <person name="Harsha H.C."/>
            <person name="Nair B."/>
            <person name="Prasad T.S."/>
            <person name="Chauhan D.S."/>
            <person name="Katoch K."/>
            <person name="Katoch V.M."/>
            <person name="Kumar P."/>
            <person name="Chaerkady R."/>
            <person name="Ramachandran S."/>
            <person name="Dash D."/>
            <person name="Pandey A."/>
        </authorList>
    </citation>
    <scope>ACETYLATION [LARGE SCALE ANALYSIS] AT THR-2</scope>
    <scope>CLEAVAGE OF INITIATOR METHIONINE [LARGE SCALE ANALYSIS]</scope>
    <scope>IDENTIFICATION BY MASS SPECTROMETRY [LARGE SCALE ANALYSIS]</scope>
    <source>
        <strain>ATCC 25618 / H37Rv</strain>
    </source>
</reference>
<reference key="5">
    <citation type="submission" date="2013-01" db="PDB data bank">
        <title>Structure of extra-cytoplasmic function (ECF) sigma factor SigK in complex with its negative regulator RskA from Mycobacterium tuberculosis.</title>
        <authorList>
            <person name="Shukla J.K."/>
            <person name="Gopal B."/>
        </authorList>
    </citation>
    <scope>X-RAY CRYSTALLOGRAPHY (2.4 ANGSTROMS) OF 1-80 IN COMPLEX WITH SIGK</scope>
    <scope>SUBUNIT</scope>
</reference>
<accession>P9WGX5</accession>
<accession>L0T3K9</accession>
<accession>O53729</accession>
<accession>Q7D9T4</accession>
<proteinExistence type="evidence at protein level"/>